<accession>Q5B1X5</accession>
<accession>C8VGG5</accession>
<organism>
    <name type="scientific">Emericella nidulans (strain FGSC A4 / ATCC 38163 / CBS 112.46 / NRRL 194 / M139)</name>
    <name type="common">Aspergillus nidulans</name>
    <dbReference type="NCBI Taxonomy" id="227321"/>
    <lineage>
        <taxon>Eukaryota</taxon>
        <taxon>Fungi</taxon>
        <taxon>Dikarya</taxon>
        <taxon>Ascomycota</taxon>
        <taxon>Pezizomycotina</taxon>
        <taxon>Eurotiomycetes</taxon>
        <taxon>Eurotiomycetidae</taxon>
        <taxon>Eurotiales</taxon>
        <taxon>Aspergillaceae</taxon>
        <taxon>Aspergillus</taxon>
        <taxon>Aspergillus subgen. Nidulantes</taxon>
    </lineage>
</organism>
<evidence type="ECO:0000250" key="1">
    <source>
        <dbReference type="UniProtKB" id="P42945"/>
    </source>
</evidence>
<evidence type="ECO:0000255" key="2"/>
<evidence type="ECO:0000305" key="3"/>
<evidence type="ECO:0000312" key="4">
    <source>
        <dbReference type="EMBL" id="EAA62615.1"/>
    </source>
</evidence>
<feature type="chain" id="PRO_0000308504" description="U3 small nucleolar RNA-associated protein 10">
    <location>
        <begin position="1"/>
        <end position="1801"/>
    </location>
</feature>
<feature type="transmembrane region" description="Helical" evidence="2">
    <location>
        <begin position="102"/>
        <end position="122"/>
    </location>
</feature>
<feature type="transmembrane region" description="Helical" evidence="2">
    <location>
        <begin position="136"/>
        <end position="156"/>
    </location>
</feature>
<feature type="transmembrane region" description="Helical" evidence="2">
    <location>
        <begin position="939"/>
        <end position="959"/>
    </location>
</feature>
<feature type="transmembrane region" description="Helical" evidence="2">
    <location>
        <begin position="995"/>
        <end position="1015"/>
    </location>
</feature>
<feature type="repeat" description="HEAT 1" evidence="2">
    <location>
        <begin position="581"/>
        <end position="619"/>
    </location>
</feature>
<feature type="repeat" description="HEAT 2" evidence="2">
    <location>
        <begin position="1038"/>
        <end position="1076"/>
    </location>
</feature>
<feature type="repeat" description="HEAT 3" evidence="2">
    <location>
        <begin position="1110"/>
        <end position="1148"/>
    </location>
</feature>
<feature type="repeat" description="HEAT 4" evidence="2">
    <location>
        <begin position="1244"/>
        <end position="1282"/>
    </location>
</feature>
<feature type="repeat" description="HEAT 5" evidence="2">
    <location>
        <begin position="1288"/>
        <end position="1327"/>
    </location>
</feature>
<feature type="repeat" description="HEAT 6" evidence="2">
    <location>
        <begin position="1756"/>
        <end position="1794"/>
    </location>
</feature>
<name>UTP10_EMENI</name>
<keyword id="KW-0472">Membrane</keyword>
<keyword id="KW-0539">Nucleus</keyword>
<keyword id="KW-1185">Reference proteome</keyword>
<keyword id="KW-0677">Repeat</keyword>
<keyword id="KW-0687">Ribonucleoprotein</keyword>
<keyword id="KW-0690">Ribosome biogenesis</keyword>
<keyword id="KW-0698">rRNA processing</keyword>
<keyword id="KW-0812">Transmembrane</keyword>
<keyword id="KW-1133">Transmembrane helix</keyword>
<protein>
    <recommendedName>
        <fullName>U3 small nucleolar RNA-associated protein 10</fullName>
    </recommendedName>
</protein>
<dbReference type="EMBL" id="AACD01000094">
    <property type="protein sequence ID" value="EAA62615.1"/>
    <property type="molecule type" value="Genomic_DNA"/>
</dbReference>
<dbReference type="EMBL" id="BN001305">
    <property type="protein sequence ID" value="CBF81880.1"/>
    <property type="molecule type" value="Genomic_DNA"/>
</dbReference>
<dbReference type="RefSeq" id="XP_663059.1">
    <property type="nucleotide sequence ID" value="XM_657967.1"/>
</dbReference>
<dbReference type="SMR" id="Q5B1X5"/>
<dbReference type="FunCoup" id="Q5B1X5">
    <property type="interactions" value="1079"/>
</dbReference>
<dbReference type="STRING" id="227321.Q5B1X5"/>
<dbReference type="EnsemblFungi" id="CBF81880">
    <property type="protein sequence ID" value="CBF81880"/>
    <property type="gene ID" value="ANIA_05455"/>
</dbReference>
<dbReference type="KEGG" id="ani:ANIA_05455"/>
<dbReference type="VEuPathDB" id="FungiDB:AN5455"/>
<dbReference type="eggNOG" id="KOG1837">
    <property type="taxonomic scope" value="Eukaryota"/>
</dbReference>
<dbReference type="HOGENOM" id="CLU_001128_3_1_1"/>
<dbReference type="InParanoid" id="Q5B1X5"/>
<dbReference type="OMA" id="NDVMWKQ"/>
<dbReference type="OrthoDB" id="31183at2759"/>
<dbReference type="Proteomes" id="UP000000560">
    <property type="component" value="Chromosome V"/>
</dbReference>
<dbReference type="GO" id="GO:0030686">
    <property type="term" value="C:90S preribosome"/>
    <property type="evidence" value="ECO:0000318"/>
    <property type="project" value="GO_Central"/>
</dbReference>
<dbReference type="GO" id="GO:0016020">
    <property type="term" value="C:membrane"/>
    <property type="evidence" value="ECO:0007669"/>
    <property type="project" value="UniProtKB-SubCell"/>
</dbReference>
<dbReference type="GO" id="GO:0032040">
    <property type="term" value="C:small-subunit processome"/>
    <property type="evidence" value="ECO:0000318"/>
    <property type="project" value="GO_Central"/>
</dbReference>
<dbReference type="GO" id="GO:0034455">
    <property type="term" value="C:t-UTP complex"/>
    <property type="evidence" value="ECO:0000318"/>
    <property type="project" value="GO_Central"/>
</dbReference>
<dbReference type="GO" id="GO:0030515">
    <property type="term" value="F:snoRNA binding"/>
    <property type="evidence" value="ECO:0000318"/>
    <property type="project" value="GO_Central"/>
</dbReference>
<dbReference type="GO" id="GO:0000462">
    <property type="term" value="P:maturation of SSU-rRNA from tricistronic rRNA transcript (SSU-rRNA, 5.8S rRNA, LSU-rRNA)"/>
    <property type="evidence" value="ECO:0000318"/>
    <property type="project" value="GO_Central"/>
</dbReference>
<dbReference type="GO" id="GO:0045943">
    <property type="term" value="P:positive regulation of transcription by RNA polymerase I"/>
    <property type="evidence" value="ECO:0000318"/>
    <property type="project" value="GO_Central"/>
</dbReference>
<dbReference type="FunFam" id="1.25.10.10:FF:002089">
    <property type="entry name" value="U3 small nucleolar RNA-associated protein 10"/>
    <property type="match status" value="1"/>
</dbReference>
<dbReference type="Gene3D" id="1.25.10.10">
    <property type="entry name" value="Leucine-rich Repeat Variant"/>
    <property type="match status" value="3"/>
</dbReference>
<dbReference type="InterPro" id="IPR011989">
    <property type="entry name" value="ARM-like"/>
</dbReference>
<dbReference type="InterPro" id="IPR016024">
    <property type="entry name" value="ARM-type_fold"/>
</dbReference>
<dbReference type="InterPro" id="IPR012954">
    <property type="entry name" value="BP28_C_dom"/>
</dbReference>
<dbReference type="InterPro" id="IPR000357">
    <property type="entry name" value="HEAT"/>
</dbReference>
<dbReference type="InterPro" id="IPR021133">
    <property type="entry name" value="HEAT_type_2"/>
</dbReference>
<dbReference type="InterPro" id="IPR056473">
    <property type="entry name" value="HEAT_Utp10/HEAT1"/>
</dbReference>
<dbReference type="InterPro" id="IPR022125">
    <property type="entry name" value="U3snoRNP10_N"/>
</dbReference>
<dbReference type="InterPro" id="IPR040191">
    <property type="entry name" value="UTP10"/>
</dbReference>
<dbReference type="PANTHER" id="PTHR13457">
    <property type="entry name" value="BAP28"/>
    <property type="match status" value="1"/>
</dbReference>
<dbReference type="PANTHER" id="PTHR13457:SF1">
    <property type="entry name" value="HEAT REPEAT-CONTAINING PROTEIN 1"/>
    <property type="match status" value="1"/>
</dbReference>
<dbReference type="Pfam" id="PF08146">
    <property type="entry name" value="BP28CT"/>
    <property type="match status" value="1"/>
</dbReference>
<dbReference type="Pfam" id="PF02985">
    <property type="entry name" value="HEAT"/>
    <property type="match status" value="1"/>
</dbReference>
<dbReference type="Pfam" id="PF23243">
    <property type="entry name" value="HEAT_HEATR1"/>
    <property type="match status" value="1"/>
</dbReference>
<dbReference type="Pfam" id="PF12397">
    <property type="entry name" value="U3snoRNP10"/>
    <property type="match status" value="1"/>
</dbReference>
<dbReference type="SMART" id="SM01036">
    <property type="entry name" value="BP28CT"/>
    <property type="match status" value="1"/>
</dbReference>
<dbReference type="SUPFAM" id="SSF48371">
    <property type="entry name" value="ARM repeat"/>
    <property type="match status" value="2"/>
</dbReference>
<dbReference type="PROSITE" id="PS50077">
    <property type="entry name" value="HEAT_REPEAT"/>
    <property type="match status" value="1"/>
</dbReference>
<reference evidence="4" key="1">
    <citation type="journal article" date="2005" name="Nature">
        <title>Sequencing of Aspergillus nidulans and comparative analysis with A. fumigatus and A. oryzae.</title>
        <authorList>
            <person name="Galagan J.E."/>
            <person name="Calvo S.E."/>
            <person name="Cuomo C."/>
            <person name="Ma L.-J."/>
            <person name="Wortman J.R."/>
            <person name="Batzoglou S."/>
            <person name="Lee S.-I."/>
            <person name="Bastuerkmen M."/>
            <person name="Spevak C.C."/>
            <person name="Clutterbuck J."/>
            <person name="Kapitonov V."/>
            <person name="Jurka J."/>
            <person name="Scazzocchio C."/>
            <person name="Farman M.L."/>
            <person name="Butler J."/>
            <person name="Purcell S."/>
            <person name="Harris S."/>
            <person name="Braus G.H."/>
            <person name="Draht O."/>
            <person name="Busch S."/>
            <person name="D'Enfert C."/>
            <person name="Bouchier C."/>
            <person name="Goldman G.H."/>
            <person name="Bell-Pedersen D."/>
            <person name="Griffiths-Jones S."/>
            <person name="Doonan J.H."/>
            <person name="Yu J."/>
            <person name="Vienken K."/>
            <person name="Pain A."/>
            <person name="Freitag M."/>
            <person name="Selker E.U."/>
            <person name="Archer D.B."/>
            <person name="Penalva M.A."/>
            <person name="Oakley B.R."/>
            <person name="Momany M."/>
            <person name="Tanaka T."/>
            <person name="Kumagai T."/>
            <person name="Asai K."/>
            <person name="Machida M."/>
            <person name="Nierman W.C."/>
            <person name="Denning D.W."/>
            <person name="Caddick M.X."/>
            <person name="Hynes M."/>
            <person name="Paoletti M."/>
            <person name="Fischer R."/>
            <person name="Miller B.L."/>
            <person name="Dyer P.S."/>
            <person name="Sachs M.S."/>
            <person name="Osmani S.A."/>
            <person name="Birren B.W."/>
        </authorList>
    </citation>
    <scope>NUCLEOTIDE SEQUENCE [LARGE SCALE GENOMIC DNA]</scope>
    <source>
        <strain>FGSC A4 / ATCC 38163 / CBS 112.46 / NRRL 194 / M139</strain>
    </source>
</reference>
<reference key="2">
    <citation type="journal article" date="2009" name="Fungal Genet. Biol.">
        <title>The 2008 update of the Aspergillus nidulans genome annotation: a community effort.</title>
        <authorList>
            <person name="Wortman J.R."/>
            <person name="Gilsenan J.M."/>
            <person name="Joardar V."/>
            <person name="Deegan J."/>
            <person name="Clutterbuck J."/>
            <person name="Andersen M.R."/>
            <person name="Archer D."/>
            <person name="Bencina M."/>
            <person name="Braus G."/>
            <person name="Coutinho P."/>
            <person name="von Dohren H."/>
            <person name="Doonan J."/>
            <person name="Driessen A.J."/>
            <person name="Durek P."/>
            <person name="Espeso E."/>
            <person name="Fekete E."/>
            <person name="Flipphi M."/>
            <person name="Estrada C.G."/>
            <person name="Geysens S."/>
            <person name="Goldman G."/>
            <person name="de Groot P.W."/>
            <person name="Hansen K."/>
            <person name="Harris S.D."/>
            <person name="Heinekamp T."/>
            <person name="Helmstaedt K."/>
            <person name="Henrissat B."/>
            <person name="Hofmann G."/>
            <person name="Homan T."/>
            <person name="Horio T."/>
            <person name="Horiuchi H."/>
            <person name="James S."/>
            <person name="Jones M."/>
            <person name="Karaffa L."/>
            <person name="Karanyi Z."/>
            <person name="Kato M."/>
            <person name="Keller N."/>
            <person name="Kelly D.E."/>
            <person name="Kiel J.A."/>
            <person name="Kim J.M."/>
            <person name="van der Klei I.J."/>
            <person name="Klis F.M."/>
            <person name="Kovalchuk A."/>
            <person name="Krasevec N."/>
            <person name="Kubicek C.P."/>
            <person name="Liu B."/>
            <person name="Maccabe A."/>
            <person name="Meyer V."/>
            <person name="Mirabito P."/>
            <person name="Miskei M."/>
            <person name="Mos M."/>
            <person name="Mullins J."/>
            <person name="Nelson D.R."/>
            <person name="Nielsen J."/>
            <person name="Oakley B.R."/>
            <person name="Osmani S.A."/>
            <person name="Pakula T."/>
            <person name="Paszewski A."/>
            <person name="Paulsen I."/>
            <person name="Pilsyk S."/>
            <person name="Pocsi I."/>
            <person name="Punt P.J."/>
            <person name="Ram A.F."/>
            <person name="Ren Q."/>
            <person name="Robellet X."/>
            <person name="Robson G."/>
            <person name="Seiboth B."/>
            <person name="van Solingen P."/>
            <person name="Specht T."/>
            <person name="Sun J."/>
            <person name="Taheri-Talesh N."/>
            <person name="Takeshita N."/>
            <person name="Ussery D."/>
            <person name="vanKuyk P.A."/>
            <person name="Visser H."/>
            <person name="van de Vondervoort P.J."/>
            <person name="de Vries R.P."/>
            <person name="Walton J."/>
            <person name="Xiang X."/>
            <person name="Xiong Y."/>
            <person name="Zeng A.P."/>
            <person name="Brandt B.W."/>
            <person name="Cornell M.J."/>
            <person name="van den Hondel C.A."/>
            <person name="Visser J."/>
            <person name="Oliver S.G."/>
            <person name="Turner G."/>
        </authorList>
    </citation>
    <scope>GENOME REANNOTATION</scope>
    <source>
        <strain>FGSC A4 / ATCC 38163 / CBS 112.46 / NRRL 194 / M139</strain>
    </source>
</reference>
<comment type="function">
    <text evidence="1">Involved in nucleolar processing of pre-18S ribosomal RNA. Involved in ribosome biosynthesis (By similarity).</text>
</comment>
<comment type="subunit">
    <text evidence="1">Component of the ribosomal small subunit (SSU) processome.</text>
</comment>
<comment type="subcellular location">
    <subcellularLocation>
        <location evidence="1 2">Nucleus</location>
        <location evidence="1 2">Nucleolus</location>
    </subcellularLocation>
    <subcellularLocation>
        <location evidence="2">Membrane</location>
        <topology evidence="2">Multi-pass membrane protein</topology>
    </subcellularLocation>
</comment>
<comment type="similarity">
    <text evidence="3">Belongs to the HEATR1/UTP10 family.</text>
</comment>
<gene>
    <name evidence="1" type="primary">utp10</name>
    <name type="ORF">AN5455</name>
</gene>
<sequence>MASSLAAQLSQIAANSTNQLNLKAQRLAHSKSLIFDKRVAGSQDFDTIYDICYDGFRELCQLDFRFAQFERSIFSEQSKVQDRTEMNVEQNRELDSVLEAFLALVGGRLLLSPAVKAVEWLIRRFRVHEYNTRFTILTFLPYYSTPVFLNLLAILPDDLPSALKVLIPYKRSAINPVRQALVQNAISNRDLITTLNNYVLQVCRQRAHHHALLAFWAGIITEGVAGMLDSSRSGRRNVEKQKHDDIILQILPVLNDGFAMKDVSELVIGCYMVCVVLAQKAELQDRVLDGLMEAVTGSWTEETMSSGLICVAVLAQQKPDPILPKRVFKAMLRMKDPLKQLADISTEYKTSQLLLGLVAGCVDSLSTQKDSARLELLSSMFKSQLLNDADTAKAMTFVLQAASAVGGTISLDTQTQIAEIVQHFSRSSSLQPVFQKVIDESSIDLSVIEYNLQTVIESVPVNKAIEDVEMEDADKTETATDGYDSALESLAKESSFSTSFLTAQSIPVFDKLVQTFALSAGSPERVSAFVELPVLCKANATTSPQFLSFFVRVFTGMYPAGVKAAALKTISSIVSSAAWSDVDVQALLPFMLIALADPSERVRSGAVDALANIGKVVDKKKKSGVWARDSLYGKSMHIPWLSSSDFQKILERAVLPELEECRSDGEHIGRALENALRGAASDSASAIKKPLRLAFFTYLCSHAVHLPLFAPRAGLLNLLNRVDKAGGTTRTKELEPLLKKWRDMSEQEVAEVHEKEQISVSDFEAQVLKTVTPKEKDSINLLLSTVTPYSPSLRASFVSSVFNRISEIWGKVPEDRQITAAEKLFELSTQASESPLVDNARDLLRRVELPGPVLLNYLQQIPASITDIDSLGPAPKRRRTSQNNMVAMTTKDEAKLSKLMDKMTFILELVDGSSPEAHPELTEWLFQTLAALHHFKSQIQSGMSYLLSLTLGSLLAIVNRSRASSKPQFDTSVVRADLVVDCVRTTESPQVQNTALLLVAGLSVIAPELVLHSVMPIFTFMGSSVLRKDDDYSVSVIDQTIDQVVPALIQSLRHQKRDVVSGTSELLLSFTAAFEHIPSHRRLRLFHALITKLGTEEFLFAVLAMLANRYSMDKAVLVLMTGLVSDADATVELSTYSKFLNLVGDSLKSKPGISQVLLGIGSDDGREPHKVAADLLRALAYLFKHSSLKVKIARALTTETDDSERIRALFSNILEQVLAIGESMQSVKPVHQAAGDVLSGLFSTLTTIDFLDTIEALLKRPDDALRRKVLSLLATRLQQSPERDGASQTRMLDFLTVLVDIVQSSPDILLKHAAVTCIDRITEKYGKKEPSMVTSAAQVVASASCIGQEDDRIRINGVLCLASMVEVLGQAMIPALPEVLNRSLALLELSLETNKVNARLHDAVFTLFSALFVHLPYMVSASHLDRLLVLSFKSAASDEDLDNENRQEALHFMARKVDMAVALASIERNWTQAVSAGPSATHEVLDAISLSIEKHPKSATMKNLSVLTTILFRAFDLRREQTQSSESAFDASDLEEIEDLINDVTIKMIYKLNDTAFRPIFIKLVEWATGLPEKNTQGGLARLTTFYRFLQVFFGTLQSIVTGYASYIIESVVSVLETASPSNPNTKSLWLATMRMLRSAFEHDQDEFWQSPSHITKISTPLISHLRHATSTTTGALVATETIPTITELAVAADSTDNHKELNTVLMRFLRPSSASLSSSSTKRAGPGLGGDNPQTRIAALKTEQALTEHLGEDWLALLPEMLPYISELMEDEDEGVEREVRKWVKQIEGVLGERLDDMLT</sequence>
<proteinExistence type="inferred from homology"/>